<evidence type="ECO:0000250" key="1">
    <source>
        <dbReference type="UniProtKB" id="O89017"/>
    </source>
</evidence>
<evidence type="ECO:0000250" key="2">
    <source>
        <dbReference type="UniProtKB" id="Q99538"/>
    </source>
</evidence>
<evidence type="ECO:0000255" key="3"/>
<evidence type="ECO:0000269" key="4">
    <source>
    </source>
</evidence>
<evidence type="ECO:0000305" key="5"/>
<dbReference type="EC" id="3.4.22.34"/>
<dbReference type="EMBL" id="AB032766">
    <property type="protein sequence ID" value="BAA84750.1"/>
    <property type="molecule type" value="mRNA"/>
</dbReference>
<dbReference type="EMBL" id="AF154349">
    <property type="protein sequence ID" value="AAF73260.1"/>
    <property type="molecule type" value="mRNA"/>
</dbReference>
<dbReference type="RefSeq" id="NP_071562.2">
    <property type="nucleotide sequence ID" value="NM_022226.2"/>
</dbReference>
<dbReference type="SMR" id="Q9R0J8"/>
<dbReference type="FunCoup" id="Q9R0J8">
    <property type="interactions" value="609"/>
</dbReference>
<dbReference type="STRING" id="10116.ENSRNOP00000010101"/>
<dbReference type="MEROPS" id="C13.004"/>
<dbReference type="GlyCosmos" id="Q9R0J8">
    <property type="glycosylation" value="5 sites, No reported glycans"/>
</dbReference>
<dbReference type="GlyGen" id="Q9R0J8">
    <property type="glycosylation" value="6 sites"/>
</dbReference>
<dbReference type="iPTMnet" id="Q9R0J8"/>
<dbReference type="PhosphoSitePlus" id="Q9R0J8"/>
<dbReference type="jPOST" id="Q9R0J8"/>
<dbReference type="PaxDb" id="10116-ENSRNOP00000010101"/>
<dbReference type="GeneID" id="63865"/>
<dbReference type="KEGG" id="rno:63865"/>
<dbReference type="UCSC" id="RGD:619832">
    <property type="organism name" value="rat"/>
</dbReference>
<dbReference type="AGR" id="RGD:619832"/>
<dbReference type="CTD" id="5641"/>
<dbReference type="RGD" id="619832">
    <property type="gene designation" value="Lgmn"/>
</dbReference>
<dbReference type="eggNOG" id="KOG1348">
    <property type="taxonomic scope" value="Eukaryota"/>
</dbReference>
<dbReference type="InParanoid" id="Q9R0J8"/>
<dbReference type="PhylomeDB" id="Q9R0J8"/>
<dbReference type="Reactome" id="R-RNO-1679131">
    <property type="pathway name" value="Trafficking and processing of endosomal TLR"/>
</dbReference>
<dbReference type="Reactome" id="R-RNO-196791">
    <property type="pathway name" value="Vitamin D (calciferol) metabolism"/>
</dbReference>
<dbReference type="Reactome" id="R-RNO-2132295">
    <property type="pathway name" value="MHC class II antigen presentation"/>
</dbReference>
<dbReference type="PRO" id="PR:Q9R0J8"/>
<dbReference type="Proteomes" id="UP000002494">
    <property type="component" value="Unplaced"/>
</dbReference>
<dbReference type="GO" id="GO:0045177">
    <property type="term" value="C:apical part of cell"/>
    <property type="evidence" value="ECO:0000266"/>
    <property type="project" value="RGD"/>
</dbReference>
<dbReference type="GO" id="GO:0005737">
    <property type="term" value="C:cytoplasm"/>
    <property type="evidence" value="ECO:0000266"/>
    <property type="project" value="RGD"/>
</dbReference>
<dbReference type="GO" id="GO:0005576">
    <property type="term" value="C:extracellular region"/>
    <property type="evidence" value="ECO:0000266"/>
    <property type="project" value="RGD"/>
</dbReference>
<dbReference type="GO" id="GO:0005770">
    <property type="term" value="C:late endosome"/>
    <property type="evidence" value="ECO:0000266"/>
    <property type="project" value="RGD"/>
</dbReference>
<dbReference type="GO" id="GO:0043202">
    <property type="term" value="C:lysosomal lumen"/>
    <property type="evidence" value="ECO:0000250"/>
    <property type="project" value="UniProtKB"/>
</dbReference>
<dbReference type="GO" id="GO:0005764">
    <property type="term" value="C:lysosome"/>
    <property type="evidence" value="ECO:0000314"/>
    <property type="project" value="UniProtKB"/>
</dbReference>
<dbReference type="GO" id="GO:0048471">
    <property type="term" value="C:perinuclear region of cytoplasm"/>
    <property type="evidence" value="ECO:0000266"/>
    <property type="project" value="RGD"/>
</dbReference>
<dbReference type="GO" id="GO:0004197">
    <property type="term" value="F:cysteine-type endopeptidase activity"/>
    <property type="evidence" value="ECO:0000315"/>
    <property type="project" value="ARUK-UCL"/>
</dbReference>
<dbReference type="GO" id="GO:0061133">
    <property type="term" value="F:endopeptidase activator activity"/>
    <property type="evidence" value="ECO:0000266"/>
    <property type="project" value="RGD"/>
</dbReference>
<dbReference type="GO" id="GO:0008233">
    <property type="term" value="F:peptidase activity"/>
    <property type="evidence" value="ECO:0000266"/>
    <property type="project" value="RGD"/>
</dbReference>
<dbReference type="GO" id="GO:0019886">
    <property type="term" value="P:antigen processing and presentation of exogenous peptide antigen via MHC class II"/>
    <property type="evidence" value="ECO:0000250"/>
    <property type="project" value="UniProtKB"/>
</dbReference>
<dbReference type="GO" id="GO:0008306">
    <property type="term" value="P:associative learning"/>
    <property type="evidence" value="ECO:0000266"/>
    <property type="project" value="RGD"/>
</dbReference>
<dbReference type="GO" id="GO:1904646">
    <property type="term" value="P:cellular response to amyloid-beta"/>
    <property type="evidence" value="ECO:0000266"/>
    <property type="project" value="RGD"/>
</dbReference>
<dbReference type="GO" id="GO:0071277">
    <property type="term" value="P:cellular response to calcium ion"/>
    <property type="evidence" value="ECO:0000266"/>
    <property type="project" value="RGD"/>
</dbReference>
<dbReference type="GO" id="GO:0035729">
    <property type="term" value="P:cellular response to hepatocyte growth factor stimulus"/>
    <property type="evidence" value="ECO:0000266"/>
    <property type="project" value="RGD"/>
</dbReference>
<dbReference type="GO" id="GO:0097061">
    <property type="term" value="P:dendritic spine organization"/>
    <property type="evidence" value="ECO:0000266"/>
    <property type="project" value="RGD"/>
</dbReference>
<dbReference type="GO" id="GO:0007613">
    <property type="term" value="P:memory"/>
    <property type="evidence" value="ECO:0000266"/>
    <property type="project" value="RGD"/>
</dbReference>
<dbReference type="GO" id="GO:1901185">
    <property type="term" value="P:negative regulation of ERBB signaling pathway"/>
    <property type="evidence" value="ECO:0000250"/>
    <property type="project" value="UniProtKB"/>
</dbReference>
<dbReference type="GO" id="GO:0010629">
    <property type="term" value="P:negative regulation of gene expression"/>
    <property type="evidence" value="ECO:0000266"/>
    <property type="project" value="RGD"/>
</dbReference>
<dbReference type="GO" id="GO:0040015">
    <property type="term" value="P:negative regulation of multicellular organism growth"/>
    <property type="evidence" value="ECO:0000266"/>
    <property type="project" value="RGD"/>
</dbReference>
<dbReference type="GO" id="GO:0043524">
    <property type="term" value="P:negative regulation of neuron apoptotic process"/>
    <property type="evidence" value="ECO:0000266"/>
    <property type="project" value="RGD"/>
</dbReference>
<dbReference type="GO" id="GO:0008284">
    <property type="term" value="P:positive regulation of cell population proliferation"/>
    <property type="evidence" value="ECO:0000266"/>
    <property type="project" value="RGD"/>
</dbReference>
<dbReference type="GO" id="GO:2001028">
    <property type="term" value="P:positive regulation of endothelial cell chemotaxis"/>
    <property type="evidence" value="ECO:0000266"/>
    <property type="project" value="RGD"/>
</dbReference>
<dbReference type="GO" id="GO:1900273">
    <property type="term" value="P:positive regulation of long-term synaptic potentiation"/>
    <property type="evidence" value="ECO:0000266"/>
    <property type="project" value="RGD"/>
</dbReference>
<dbReference type="GO" id="GO:0045931">
    <property type="term" value="P:positive regulation of mitotic cell cycle"/>
    <property type="evidence" value="ECO:0000266"/>
    <property type="project" value="RGD"/>
</dbReference>
<dbReference type="GO" id="GO:0090026">
    <property type="term" value="P:positive regulation of monocyte chemotaxis"/>
    <property type="evidence" value="ECO:0000266"/>
    <property type="project" value="RGD"/>
</dbReference>
<dbReference type="GO" id="GO:0051604">
    <property type="term" value="P:protein maturation"/>
    <property type="evidence" value="ECO:0000266"/>
    <property type="project" value="RGD"/>
</dbReference>
<dbReference type="GO" id="GO:0006508">
    <property type="term" value="P:proteolysis"/>
    <property type="evidence" value="ECO:0000250"/>
    <property type="project" value="UniProtKB"/>
</dbReference>
<dbReference type="GO" id="GO:0051603">
    <property type="term" value="P:proteolysis involved in protein catabolic process"/>
    <property type="evidence" value="ECO:0000250"/>
    <property type="project" value="UniProtKB"/>
</dbReference>
<dbReference type="GO" id="GO:0032801">
    <property type="term" value="P:receptor catabolic process"/>
    <property type="evidence" value="ECO:0000250"/>
    <property type="project" value="UniProtKB"/>
</dbReference>
<dbReference type="GO" id="GO:0003014">
    <property type="term" value="P:renal system process"/>
    <property type="evidence" value="ECO:0000250"/>
    <property type="project" value="UniProtKB"/>
</dbReference>
<dbReference type="GO" id="GO:0010447">
    <property type="term" value="P:response to acidic pH"/>
    <property type="evidence" value="ECO:0000266"/>
    <property type="project" value="RGD"/>
</dbReference>
<dbReference type="GO" id="GO:0006624">
    <property type="term" value="P:vacuolar protein processing"/>
    <property type="evidence" value="ECO:0000318"/>
    <property type="project" value="GO_Central"/>
</dbReference>
<dbReference type="CDD" id="cd21115">
    <property type="entry name" value="legumain_C"/>
    <property type="match status" value="1"/>
</dbReference>
<dbReference type="FunFam" id="3.40.50.1460:FF:000006">
    <property type="entry name" value="Legumain"/>
    <property type="match status" value="1"/>
</dbReference>
<dbReference type="FunFam" id="1.10.132.130:FF:000002">
    <property type="entry name" value="Legumain preproprotein"/>
    <property type="match status" value="1"/>
</dbReference>
<dbReference type="Gene3D" id="1.10.132.130">
    <property type="match status" value="1"/>
</dbReference>
<dbReference type="Gene3D" id="3.40.50.1460">
    <property type="match status" value="1"/>
</dbReference>
<dbReference type="InterPro" id="IPR043577">
    <property type="entry name" value="AE"/>
</dbReference>
<dbReference type="InterPro" id="IPR048501">
    <property type="entry name" value="Legum_prodom"/>
</dbReference>
<dbReference type="InterPro" id="IPR046427">
    <property type="entry name" value="Legumain_prodom_sf"/>
</dbReference>
<dbReference type="InterPro" id="IPR001096">
    <property type="entry name" value="Peptidase_C13"/>
</dbReference>
<dbReference type="PANTHER" id="PTHR12000">
    <property type="entry name" value="HEMOGLOBINASE FAMILY MEMBER"/>
    <property type="match status" value="1"/>
</dbReference>
<dbReference type="PANTHER" id="PTHR12000:SF42">
    <property type="entry name" value="LEGUMAIN"/>
    <property type="match status" value="1"/>
</dbReference>
<dbReference type="Pfam" id="PF20985">
    <property type="entry name" value="Legum_prodom"/>
    <property type="match status" value="1"/>
</dbReference>
<dbReference type="Pfam" id="PF01650">
    <property type="entry name" value="Peptidase_C13"/>
    <property type="match status" value="1"/>
</dbReference>
<dbReference type="PIRSF" id="PIRSF500139">
    <property type="entry name" value="AE"/>
    <property type="match status" value="1"/>
</dbReference>
<dbReference type="PIRSF" id="PIRSF019663">
    <property type="entry name" value="Legumain"/>
    <property type="match status" value="1"/>
</dbReference>
<dbReference type="PRINTS" id="PR00776">
    <property type="entry name" value="HEMOGLOBNASE"/>
</dbReference>
<accession>Q9R0J8</accession>
<accession>Q9JLN3</accession>
<reference key="1">
    <citation type="submission" date="1999-09" db="EMBL/GenBank/DDBJ databases">
        <authorList>
            <person name="Ishidoh K."/>
        </authorList>
    </citation>
    <scope>NUCLEOTIDE SEQUENCE [MRNA]</scope>
    <source>
        <tissue>Liver</tissue>
    </source>
</reference>
<reference key="2">
    <citation type="submission" date="1999-05" db="EMBL/GenBank/DDBJ databases">
        <title>Cloning and expression of rat legumain.</title>
        <authorList>
            <person name="Neumann J."/>
            <person name="Koehler B."/>
            <person name="Reske K."/>
        </authorList>
    </citation>
    <scope>NUCLEOTIDE SEQUENCE [MRNA]</scope>
</reference>
<reference key="3">
    <citation type="journal article" date="1998" name="Biochem. J.">
        <title>Cloning and expression of mouse legumain, a lysosomal endopeptidase.</title>
        <authorList>
            <person name="Chen J.-M."/>
            <person name="Dando P.M."/>
            <person name="Stevens R.A.E."/>
            <person name="Fortunato M."/>
            <person name="Barrett A.J."/>
        </authorList>
    </citation>
    <scope>SUBCELLULAR LOCATION</scope>
    <scope>TISSUE SPECIFICITY</scope>
</reference>
<feature type="signal peptide" evidence="2">
    <location>
        <begin position="1"/>
        <end position="17"/>
    </location>
</feature>
<feature type="chain" id="PRO_0000026506" description="Legumain">
    <location>
        <begin position="18"/>
        <end position="325"/>
    </location>
</feature>
<feature type="propeptide" id="PRO_0000026507" evidence="1">
    <location>
        <begin position="326"/>
        <end position="435"/>
    </location>
</feature>
<feature type="active site" evidence="1">
    <location>
        <position position="150"/>
    </location>
</feature>
<feature type="active site" description="Nucleophile" evidence="1">
    <location>
        <position position="191"/>
    </location>
</feature>
<feature type="site" description="Cleavage; by autolysis">
    <location>
        <begin position="325"/>
        <end position="326"/>
    </location>
</feature>
<feature type="glycosylation site" description="N-linked (GlcNAc...) asparagine" evidence="3">
    <location>
        <position position="93"/>
    </location>
</feature>
<feature type="glycosylation site" description="N-linked (GlcNAc...) asparagine" evidence="3">
    <location>
        <position position="169"/>
    </location>
</feature>
<feature type="glycosylation site" description="N-linked (GlcNAc...) asparagine" evidence="3">
    <location>
        <position position="215"/>
    </location>
</feature>
<feature type="glycosylation site" description="N-linked (GlcNAc...) asparagine" evidence="3">
    <location>
        <position position="265"/>
    </location>
</feature>
<feature type="glycosylation site" description="N-linked (GlcNAc...) asparagine" evidence="3">
    <location>
        <position position="274"/>
    </location>
</feature>
<feature type="disulfide bond" evidence="1">
    <location>
        <begin position="380"/>
        <end position="414"/>
    </location>
</feature>
<feature type="disulfide bond" evidence="1">
    <location>
        <begin position="392"/>
        <end position="431"/>
    </location>
</feature>
<feature type="sequence conflict" description="In Ref. 2; AAF73260." evidence="5" ref="2">
    <original>TWR</original>
    <variation>IWK</variation>
    <location>
        <begin position="2"/>
        <end position="4"/>
    </location>
</feature>
<name>LGMN_RAT</name>
<keyword id="KW-1015">Disulfide bond</keyword>
<keyword id="KW-0325">Glycoprotein</keyword>
<keyword id="KW-0378">Hydrolase</keyword>
<keyword id="KW-0458">Lysosome</keyword>
<keyword id="KW-0645">Protease</keyword>
<keyword id="KW-1185">Reference proteome</keyword>
<keyword id="KW-0732">Signal</keyword>
<keyword id="KW-0788">Thiol protease</keyword>
<keyword id="KW-0865">Zymogen</keyword>
<proteinExistence type="evidence at protein level"/>
<protein>
    <recommendedName>
        <fullName>Legumain</fullName>
        <ecNumber>3.4.22.34</ecNumber>
    </recommendedName>
    <alternativeName>
        <fullName>Asparaginyl endopeptidase</fullName>
    </alternativeName>
    <alternativeName>
        <fullName>Protease, cysteine 1</fullName>
    </alternativeName>
</protein>
<comment type="function">
    <text evidence="1 2">Has a strict specificity for hydrolysis of asparaginyl bonds. Can also cleave aspartyl bonds slowly, especially under acidic conditions. Involved in the processing of proteins for MHC class II antigen presentation in the lysosomal/endosomal system (By similarity). Also involved in MHC class I antigen presentation in cross-presenting dendritic cells by mediating cleavage and maturation of Perforin-2 (MPEG1), thereby promoting antigen translocation in the cytosol. Required for normal lysosomal protein degradation in renal proximal tubules. Required for normal degradation of internalized EGFR. Plays a role in the regulation of cell proliferation via its role in EGFR degradation (By similarity).</text>
</comment>
<comment type="catalytic activity">
    <reaction>
        <text>Hydrolysis of proteins and small molecule substrates at -Asn-|-Xaa- bonds.</text>
        <dbReference type="EC" id="3.4.22.34"/>
    </reaction>
</comment>
<comment type="subunit">
    <text evidence="2">Homodimer before autocatalytic removal of the propeptide. Monomer after autocatalytic processing. May interact with integrins.</text>
</comment>
<comment type="subcellular location">
    <subcellularLocation>
        <location evidence="4">Lysosome</location>
    </subcellularLocation>
</comment>
<comment type="tissue specificity">
    <text evidence="4">Detected in kidney cortex (at protein level).</text>
</comment>
<comment type="domain">
    <text evidence="2">In the zymogen form, the uncleaved propeptide blocks access to the active site.</text>
</comment>
<comment type="PTM">
    <text evidence="2">Activated by autocatalytic processing at pH 4.</text>
</comment>
<comment type="similarity">
    <text evidence="5">Belongs to the peptidase C13 family.</text>
</comment>
<organism>
    <name type="scientific">Rattus norvegicus</name>
    <name type="common">Rat</name>
    <dbReference type="NCBI Taxonomy" id="10116"/>
    <lineage>
        <taxon>Eukaryota</taxon>
        <taxon>Metazoa</taxon>
        <taxon>Chordata</taxon>
        <taxon>Craniata</taxon>
        <taxon>Vertebrata</taxon>
        <taxon>Euteleostomi</taxon>
        <taxon>Mammalia</taxon>
        <taxon>Eutheria</taxon>
        <taxon>Euarchontoglires</taxon>
        <taxon>Glires</taxon>
        <taxon>Rodentia</taxon>
        <taxon>Myomorpha</taxon>
        <taxon>Muroidea</taxon>
        <taxon>Muridae</taxon>
        <taxon>Murinae</taxon>
        <taxon>Rattus</taxon>
    </lineage>
</organism>
<sequence length="435" mass="49466">MTWRVAVLLSLVLGAGAVHIGVDDPEDGGKHWVVIVAGSNGWYNYRHQADACHAYQIIHRNGIPDEQIIVMMYDDIANNEENPTPGVVINRPNGTDVYKGVPKDYTGEDVTPENFLAVLRGDEEAVKGKGSGKVLKSGPRDHVFVYFTDHGATGILVFPNEDLHVKDLNKTIRYMYEHKMYQKMVFYIEACESGSMMNHLPDDIDVYATTAANPNESSYACYYDEERSTYLGDWYSVNWMEDSDVEDLTKETLHKQYHLVKSHTNTSHVMQYGNKSISTMKVMQFQGMKHRASSPISLPPVTHLDLTPSPDVPLTILKRKLLRTNNMKESQVLVGQIQHLLDARHIIEKSVQKIVSLLAGFGETAQKHLSERAMLTAHDCHQEAVTHFRTHCFNWHSVTYEHALRYLYVLANLCEKPYPIDRIKMAMDKVCLSHY</sequence>
<gene>
    <name type="primary">Lgmn</name>
    <name type="synonym">Prsc1</name>
</gene>